<gene>
    <name evidence="1" type="primary">ribA</name>
    <name type="ordered locus">Z2531</name>
    <name type="ordered locus">ECs1850</name>
</gene>
<proteinExistence type="inferred from homology"/>
<sequence>MQLKRVAEAKLPTPWGDFLMVGFEELATGHDHVALVYGDISGHTPVLARVHSECLTGDALFSLRCDCGFQLEAALTQIAEEGRGILLYHRQEGRNIGLLNKIRAYALQDQGYDTVEANHQLGFAADERDFTLCADMFKLLGVNEVRLLTNNPKKVEILTEAGINIVERVPLIVGRNPNNEHYLDTKAEKMGHLLNK</sequence>
<organism>
    <name type="scientific">Escherichia coli O157:H7</name>
    <dbReference type="NCBI Taxonomy" id="83334"/>
    <lineage>
        <taxon>Bacteria</taxon>
        <taxon>Pseudomonadati</taxon>
        <taxon>Pseudomonadota</taxon>
        <taxon>Gammaproteobacteria</taxon>
        <taxon>Enterobacterales</taxon>
        <taxon>Enterobacteriaceae</taxon>
        <taxon>Escherichia</taxon>
    </lineage>
</organism>
<accession>P0A7I8</accession>
<accession>P25523</accession>
<accession>P78147</accession>
<dbReference type="EC" id="3.5.4.25" evidence="1"/>
<dbReference type="EMBL" id="AE005174">
    <property type="protein sequence ID" value="AAG56536.1"/>
    <property type="molecule type" value="Genomic_DNA"/>
</dbReference>
<dbReference type="EMBL" id="BA000007">
    <property type="protein sequence ID" value="BAB35273.1"/>
    <property type="molecule type" value="Genomic_DNA"/>
</dbReference>
<dbReference type="PIR" id="B90860">
    <property type="entry name" value="B90860"/>
</dbReference>
<dbReference type="PIR" id="D85759">
    <property type="entry name" value="D85759"/>
</dbReference>
<dbReference type="RefSeq" id="NP_309877.1">
    <property type="nucleotide sequence ID" value="NC_002695.1"/>
</dbReference>
<dbReference type="RefSeq" id="WP_001176295.1">
    <property type="nucleotide sequence ID" value="NZ_VOAI01000015.1"/>
</dbReference>
<dbReference type="SMR" id="P0A7I8"/>
<dbReference type="STRING" id="155864.Z2531"/>
<dbReference type="GeneID" id="86946614"/>
<dbReference type="GeneID" id="912813"/>
<dbReference type="KEGG" id="ece:Z2531"/>
<dbReference type="KEGG" id="ecs:ECs_1850"/>
<dbReference type="PATRIC" id="fig|386585.9.peg.1949"/>
<dbReference type="eggNOG" id="COG0807">
    <property type="taxonomic scope" value="Bacteria"/>
</dbReference>
<dbReference type="HOGENOM" id="CLU_020273_2_1_6"/>
<dbReference type="OMA" id="CRDQLEA"/>
<dbReference type="UniPathway" id="UPA00275">
    <property type="reaction ID" value="UER00400"/>
</dbReference>
<dbReference type="Proteomes" id="UP000000558">
    <property type="component" value="Chromosome"/>
</dbReference>
<dbReference type="Proteomes" id="UP000002519">
    <property type="component" value="Chromosome"/>
</dbReference>
<dbReference type="GO" id="GO:0005829">
    <property type="term" value="C:cytosol"/>
    <property type="evidence" value="ECO:0007669"/>
    <property type="project" value="TreeGrafter"/>
</dbReference>
<dbReference type="GO" id="GO:0005525">
    <property type="term" value="F:GTP binding"/>
    <property type="evidence" value="ECO:0007669"/>
    <property type="project" value="UniProtKB-KW"/>
</dbReference>
<dbReference type="GO" id="GO:0003935">
    <property type="term" value="F:GTP cyclohydrolase II activity"/>
    <property type="evidence" value="ECO:0007669"/>
    <property type="project" value="UniProtKB-UniRule"/>
</dbReference>
<dbReference type="GO" id="GO:0008270">
    <property type="term" value="F:zinc ion binding"/>
    <property type="evidence" value="ECO:0007669"/>
    <property type="project" value="UniProtKB-UniRule"/>
</dbReference>
<dbReference type="GO" id="GO:0009231">
    <property type="term" value="P:riboflavin biosynthetic process"/>
    <property type="evidence" value="ECO:0007669"/>
    <property type="project" value="UniProtKB-UniRule"/>
</dbReference>
<dbReference type="CDD" id="cd00641">
    <property type="entry name" value="GTP_cyclohydro2"/>
    <property type="match status" value="1"/>
</dbReference>
<dbReference type="FunFam" id="3.40.50.10990:FF:000002">
    <property type="entry name" value="GTP cyclohydrolase-2"/>
    <property type="match status" value="1"/>
</dbReference>
<dbReference type="Gene3D" id="3.40.50.10990">
    <property type="entry name" value="GTP cyclohydrolase II"/>
    <property type="match status" value="1"/>
</dbReference>
<dbReference type="HAMAP" id="MF_00179">
    <property type="entry name" value="RibA"/>
    <property type="match status" value="1"/>
</dbReference>
<dbReference type="InterPro" id="IPR032677">
    <property type="entry name" value="GTP_cyclohydro_II"/>
</dbReference>
<dbReference type="InterPro" id="IPR000926">
    <property type="entry name" value="RibA"/>
</dbReference>
<dbReference type="InterPro" id="IPR036144">
    <property type="entry name" value="RibA-like_sf"/>
</dbReference>
<dbReference type="NCBIfam" id="NF001591">
    <property type="entry name" value="PRK00393.1"/>
    <property type="match status" value="1"/>
</dbReference>
<dbReference type="NCBIfam" id="TIGR00505">
    <property type="entry name" value="ribA"/>
    <property type="match status" value="1"/>
</dbReference>
<dbReference type="PANTHER" id="PTHR21327:SF18">
    <property type="entry name" value="3,4-DIHYDROXY-2-BUTANONE 4-PHOSPHATE SYNTHASE"/>
    <property type="match status" value="1"/>
</dbReference>
<dbReference type="PANTHER" id="PTHR21327">
    <property type="entry name" value="GTP CYCLOHYDROLASE II-RELATED"/>
    <property type="match status" value="1"/>
</dbReference>
<dbReference type="Pfam" id="PF00925">
    <property type="entry name" value="GTP_cyclohydro2"/>
    <property type="match status" value="1"/>
</dbReference>
<dbReference type="SUPFAM" id="SSF142695">
    <property type="entry name" value="RibA-like"/>
    <property type="match status" value="1"/>
</dbReference>
<reference key="1">
    <citation type="journal article" date="2001" name="Nature">
        <title>Genome sequence of enterohaemorrhagic Escherichia coli O157:H7.</title>
        <authorList>
            <person name="Perna N.T."/>
            <person name="Plunkett G. III"/>
            <person name="Burland V."/>
            <person name="Mau B."/>
            <person name="Glasner J.D."/>
            <person name="Rose D.J."/>
            <person name="Mayhew G.F."/>
            <person name="Evans P.S."/>
            <person name="Gregor J."/>
            <person name="Kirkpatrick H.A."/>
            <person name="Posfai G."/>
            <person name="Hackett J."/>
            <person name="Klink S."/>
            <person name="Boutin A."/>
            <person name="Shao Y."/>
            <person name="Miller L."/>
            <person name="Grotbeck E.J."/>
            <person name="Davis N.W."/>
            <person name="Lim A."/>
            <person name="Dimalanta E.T."/>
            <person name="Potamousis K."/>
            <person name="Apodaca J."/>
            <person name="Anantharaman T.S."/>
            <person name="Lin J."/>
            <person name="Yen G."/>
            <person name="Schwartz D.C."/>
            <person name="Welch R.A."/>
            <person name="Blattner F.R."/>
        </authorList>
    </citation>
    <scope>NUCLEOTIDE SEQUENCE [LARGE SCALE GENOMIC DNA]</scope>
    <source>
        <strain>O157:H7 / EDL933 / ATCC 700927 / EHEC</strain>
    </source>
</reference>
<reference key="2">
    <citation type="journal article" date="2001" name="DNA Res.">
        <title>Complete genome sequence of enterohemorrhagic Escherichia coli O157:H7 and genomic comparison with a laboratory strain K-12.</title>
        <authorList>
            <person name="Hayashi T."/>
            <person name="Makino K."/>
            <person name="Ohnishi M."/>
            <person name="Kurokawa K."/>
            <person name="Ishii K."/>
            <person name="Yokoyama K."/>
            <person name="Han C.-G."/>
            <person name="Ohtsubo E."/>
            <person name="Nakayama K."/>
            <person name="Murata T."/>
            <person name="Tanaka M."/>
            <person name="Tobe T."/>
            <person name="Iida T."/>
            <person name="Takami H."/>
            <person name="Honda T."/>
            <person name="Sasakawa C."/>
            <person name="Ogasawara N."/>
            <person name="Yasunaga T."/>
            <person name="Kuhara S."/>
            <person name="Shiba T."/>
            <person name="Hattori M."/>
            <person name="Shinagawa H."/>
        </authorList>
    </citation>
    <scope>NUCLEOTIDE SEQUENCE [LARGE SCALE GENOMIC DNA]</scope>
    <source>
        <strain>O157:H7 / Sakai / RIMD 0509952 / EHEC</strain>
    </source>
</reference>
<name>RIBA_ECO57</name>
<comment type="function">
    <text evidence="1">Catalyzes the conversion of GTP to 2,5-diamino-6-ribosylamino-4(3H)-pyrimidinone 5'-phosphate (DARP), formate and pyrophosphate.</text>
</comment>
<comment type="catalytic activity">
    <reaction evidence="1">
        <text>GTP + 4 H2O = 2,5-diamino-6-hydroxy-4-(5-phosphoribosylamino)-pyrimidine + formate + 2 phosphate + 3 H(+)</text>
        <dbReference type="Rhea" id="RHEA:23704"/>
        <dbReference type="ChEBI" id="CHEBI:15377"/>
        <dbReference type="ChEBI" id="CHEBI:15378"/>
        <dbReference type="ChEBI" id="CHEBI:15740"/>
        <dbReference type="ChEBI" id="CHEBI:37565"/>
        <dbReference type="ChEBI" id="CHEBI:43474"/>
        <dbReference type="ChEBI" id="CHEBI:58614"/>
        <dbReference type="EC" id="3.5.4.25"/>
    </reaction>
</comment>
<comment type="cofactor">
    <cofactor evidence="1">
        <name>Zn(2+)</name>
        <dbReference type="ChEBI" id="CHEBI:29105"/>
    </cofactor>
    <text evidence="1">Binds 1 zinc ion per subunit.</text>
</comment>
<comment type="pathway">
    <text evidence="1">Cofactor biosynthesis; riboflavin biosynthesis; 5-amino-6-(D-ribitylamino)uracil from GTP: step 1/4.</text>
</comment>
<comment type="subunit">
    <text evidence="1">Homodimer.</text>
</comment>
<comment type="similarity">
    <text evidence="1">Belongs to the GTP cyclohydrolase II family.</text>
</comment>
<protein>
    <recommendedName>
        <fullName evidence="1">GTP cyclohydrolase-2</fullName>
        <ecNumber evidence="1">3.5.4.25</ecNumber>
    </recommendedName>
    <alternativeName>
        <fullName evidence="1">GTP cyclohydrolase II</fullName>
    </alternativeName>
</protein>
<keyword id="KW-0342">GTP-binding</keyword>
<keyword id="KW-0378">Hydrolase</keyword>
<keyword id="KW-0479">Metal-binding</keyword>
<keyword id="KW-0547">Nucleotide-binding</keyword>
<keyword id="KW-1185">Reference proteome</keyword>
<keyword id="KW-0686">Riboflavin biosynthesis</keyword>
<keyword id="KW-0862">Zinc</keyword>
<feature type="chain" id="PRO_0000151755" description="GTP cyclohydrolase-2">
    <location>
        <begin position="1"/>
        <end position="196"/>
    </location>
</feature>
<feature type="active site" description="Proton acceptor" evidence="1">
    <location>
        <position position="126"/>
    </location>
</feature>
<feature type="active site" description="Nucleophile" evidence="1">
    <location>
        <position position="128"/>
    </location>
</feature>
<feature type="binding site" evidence="1">
    <location>
        <begin position="49"/>
        <end position="53"/>
    </location>
    <ligand>
        <name>GTP</name>
        <dbReference type="ChEBI" id="CHEBI:37565"/>
    </ligand>
</feature>
<feature type="binding site" evidence="1">
    <location>
        <position position="54"/>
    </location>
    <ligand>
        <name>Zn(2+)</name>
        <dbReference type="ChEBI" id="CHEBI:29105"/>
        <note>catalytic</note>
    </ligand>
</feature>
<feature type="binding site" evidence="1">
    <location>
        <position position="65"/>
    </location>
    <ligand>
        <name>Zn(2+)</name>
        <dbReference type="ChEBI" id="CHEBI:29105"/>
        <note>catalytic</note>
    </ligand>
</feature>
<feature type="binding site" evidence="1">
    <location>
        <position position="67"/>
    </location>
    <ligand>
        <name>Zn(2+)</name>
        <dbReference type="ChEBI" id="CHEBI:29105"/>
        <note>catalytic</note>
    </ligand>
</feature>
<feature type="binding site" evidence="1">
    <location>
        <position position="70"/>
    </location>
    <ligand>
        <name>GTP</name>
        <dbReference type="ChEBI" id="CHEBI:37565"/>
    </ligand>
</feature>
<feature type="binding site" evidence="1">
    <location>
        <begin position="92"/>
        <end position="94"/>
    </location>
    <ligand>
        <name>GTP</name>
        <dbReference type="ChEBI" id="CHEBI:37565"/>
    </ligand>
</feature>
<feature type="binding site" evidence="1">
    <location>
        <position position="114"/>
    </location>
    <ligand>
        <name>GTP</name>
        <dbReference type="ChEBI" id="CHEBI:37565"/>
    </ligand>
</feature>
<feature type="binding site" evidence="1">
    <location>
        <position position="149"/>
    </location>
    <ligand>
        <name>GTP</name>
        <dbReference type="ChEBI" id="CHEBI:37565"/>
    </ligand>
</feature>
<feature type="binding site" evidence="1">
    <location>
        <position position="154"/>
    </location>
    <ligand>
        <name>GTP</name>
        <dbReference type="ChEBI" id="CHEBI:37565"/>
    </ligand>
</feature>
<evidence type="ECO:0000255" key="1">
    <source>
        <dbReference type="HAMAP-Rule" id="MF_00179"/>
    </source>
</evidence>